<feature type="chain" id="PRO_1000128648" description="Small ribosomal subunit protein uS14">
    <location>
        <begin position="1"/>
        <end position="101"/>
    </location>
</feature>
<dbReference type="EMBL" id="CP000941">
    <property type="protein sequence ID" value="ACA11516.1"/>
    <property type="molecule type" value="Genomic_DNA"/>
</dbReference>
<dbReference type="RefSeq" id="WP_004086535.1">
    <property type="nucleotide sequence ID" value="NC_010513.1"/>
</dbReference>
<dbReference type="SMR" id="B0U5L2"/>
<dbReference type="GeneID" id="93904152"/>
<dbReference type="KEGG" id="xfm:Xfasm12_0507"/>
<dbReference type="HOGENOM" id="CLU_139869_0_1_6"/>
<dbReference type="GO" id="GO:0005737">
    <property type="term" value="C:cytoplasm"/>
    <property type="evidence" value="ECO:0007669"/>
    <property type="project" value="UniProtKB-ARBA"/>
</dbReference>
<dbReference type="GO" id="GO:0015935">
    <property type="term" value="C:small ribosomal subunit"/>
    <property type="evidence" value="ECO:0007669"/>
    <property type="project" value="TreeGrafter"/>
</dbReference>
<dbReference type="GO" id="GO:0019843">
    <property type="term" value="F:rRNA binding"/>
    <property type="evidence" value="ECO:0007669"/>
    <property type="project" value="UniProtKB-UniRule"/>
</dbReference>
<dbReference type="GO" id="GO:0003735">
    <property type="term" value="F:structural constituent of ribosome"/>
    <property type="evidence" value="ECO:0007669"/>
    <property type="project" value="InterPro"/>
</dbReference>
<dbReference type="GO" id="GO:0006412">
    <property type="term" value="P:translation"/>
    <property type="evidence" value="ECO:0007669"/>
    <property type="project" value="UniProtKB-UniRule"/>
</dbReference>
<dbReference type="FunFam" id="1.10.287.1480:FF:000001">
    <property type="entry name" value="30S ribosomal protein S14"/>
    <property type="match status" value="1"/>
</dbReference>
<dbReference type="Gene3D" id="1.10.287.1480">
    <property type="match status" value="1"/>
</dbReference>
<dbReference type="HAMAP" id="MF_00537">
    <property type="entry name" value="Ribosomal_uS14_1"/>
    <property type="match status" value="1"/>
</dbReference>
<dbReference type="InterPro" id="IPR001209">
    <property type="entry name" value="Ribosomal_uS14"/>
</dbReference>
<dbReference type="InterPro" id="IPR023036">
    <property type="entry name" value="Ribosomal_uS14_bac/plastid"/>
</dbReference>
<dbReference type="NCBIfam" id="NF006477">
    <property type="entry name" value="PRK08881.1"/>
    <property type="match status" value="1"/>
</dbReference>
<dbReference type="PANTHER" id="PTHR19836">
    <property type="entry name" value="30S RIBOSOMAL PROTEIN S14"/>
    <property type="match status" value="1"/>
</dbReference>
<dbReference type="PANTHER" id="PTHR19836:SF19">
    <property type="entry name" value="SMALL RIBOSOMAL SUBUNIT PROTEIN US14M"/>
    <property type="match status" value="1"/>
</dbReference>
<dbReference type="Pfam" id="PF00253">
    <property type="entry name" value="Ribosomal_S14"/>
    <property type="match status" value="1"/>
</dbReference>
<dbReference type="SUPFAM" id="SSF57716">
    <property type="entry name" value="Glucocorticoid receptor-like (DNA-binding domain)"/>
    <property type="match status" value="1"/>
</dbReference>
<name>RS14_XYLFM</name>
<accession>B0U5L2</accession>
<keyword id="KW-0687">Ribonucleoprotein</keyword>
<keyword id="KW-0689">Ribosomal protein</keyword>
<keyword id="KW-0694">RNA-binding</keyword>
<keyword id="KW-0699">rRNA-binding</keyword>
<evidence type="ECO:0000255" key="1">
    <source>
        <dbReference type="HAMAP-Rule" id="MF_00537"/>
    </source>
</evidence>
<evidence type="ECO:0000305" key="2"/>
<protein>
    <recommendedName>
        <fullName evidence="1">Small ribosomal subunit protein uS14</fullName>
    </recommendedName>
    <alternativeName>
        <fullName evidence="2">30S ribosomal protein S14</fullName>
    </alternativeName>
</protein>
<gene>
    <name evidence="1" type="primary">rpsN</name>
    <name type="ordered locus">Xfasm12_0507</name>
</gene>
<sequence length="101" mass="11616">MAKISMINRDLKRKRLAKKFADKRLSLKKVISSYASSYEEKIEASCKLQKLPRDSSPTRLRNRCEISGRPRGVYCKFGLGRNKLREAAMRGDIPGLRKASW</sequence>
<comment type="function">
    <text evidence="1">Binds 16S rRNA, required for the assembly of 30S particles and may also be responsible for determining the conformation of the 16S rRNA at the A site.</text>
</comment>
<comment type="subunit">
    <text evidence="1">Part of the 30S ribosomal subunit. Contacts proteins S3 and S10.</text>
</comment>
<comment type="similarity">
    <text evidence="1">Belongs to the universal ribosomal protein uS14 family.</text>
</comment>
<proteinExistence type="inferred from homology"/>
<organism>
    <name type="scientific">Xylella fastidiosa (strain M12)</name>
    <dbReference type="NCBI Taxonomy" id="405440"/>
    <lineage>
        <taxon>Bacteria</taxon>
        <taxon>Pseudomonadati</taxon>
        <taxon>Pseudomonadota</taxon>
        <taxon>Gammaproteobacteria</taxon>
        <taxon>Lysobacterales</taxon>
        <taxon>Lysobacteraceae</taxon>
        <taxon>Xylella</taxon>
    </lineage>
</organism>
<reference key="1">
    <citation type="journal article" date="2010" name="J. Bacteriol.">
        <title>Whole genome sequences of two Xylella fastidiosa strains (M12 and M23) causing almond leaf scorch disease in California.</title>
        <authorList>
            <person name="Chen J."/>
            <person name="Xie G."/>
            <person name="Han S."/>
            <person name="Chertkov O."/>
            <person name="Sims D."/>
            <person name="Civerolo E.L."/>
        </authorList>
    </citation>
    <scope>NUCLEOTIDE SEQUENCE [LARGE SCALE GENOMIC DNA]</scope>
    <source>
        <strain>M12</strain>
    </source>
</reference>